<organism>
    <name type="scientific">Paracoccidioides brasiliensis (strain Pb18)</name>
    <dbReference type="NCBI Taxonomy" id="502780"/>
    <lineage>
        <taxon>Eukaryota</taxon>
        <taxon>Fungi</taxon>
        <taxon>Dikarya</taxon>
        <taxon>Ascomycota</taxon>
        <taxon>Pezizomycotina</taxon>
        <taxon>Eurotiomycetes</taxon>
        <taxon>Eurotiomycetidae</taxon>
        <taxon>Onygenales</taxon>
        <taxon>Ajellomycetaceae</taxon>
        <taxon>Paracoccidioides</taxon>
    </lineage>
</organism>
<sequence>MSDIKDGNNDHLVESDDPEHPANLIPALCRNFYSHGWVTGTGGGASIKRDNHIFIAPSGVQKELIQPHNIFVLSYPTPKYPPSARQYIRKPLKLNPSACTPLFLAAFERGAGCCIHTHSQWAVLVTLLVEREKGPEGCFEISNIEQIKGIPRGKGKGMMGFYDTLKIPIIENTAFEEDLTQSLEEAMEMYPDTYAVLVRRHGIYVWGDDVAKAKTQCESLDYLFQLAVEMHRLGLPWVKS</sequence>
<keyword id="KW-0028">Amino-acid biosynthesis</keyword>
<keyword id="KW-0963">Cytoplasm</keyword>
<keyword id="KW-0456">Lyase</keyword>
<keyword id="KW-0479">Metal-binding</keyword>
<keyword id="KW-0486">Methionine biosynthesis</keyword>
<keyword id="KW-1185">Reference proteome</keyword>
<keyword id="KW-0862">Zinc</keyword>
<evidence type="ECO:0000255" key="1">
    <source>
        <dbReference type="HAMAP-Rule" id="MF_03116"/>
    </source>
</evidence>
<protein>
    <recommendedName>
        <fullName evidence="1">Methylthioribulose-1-phosphate dehydratase</fullName>
        <shortName evidence="1">MTRu-1-P dehydratase</shortName>
        <ecNumber evidence="1">4.2.1.109</ecNumber>
    </recommendedName>
</protein>
<comment type="function">
    <text evidence="1">Catalyzes the dehydration of methylthioribulose-1-phosphate (MTRu-1-P) into 2,3-diketo-5-methylthiopentyl-1-phosphate (DK-MTP-1-P).</text>
</comment>
<comment type="catalytic activity">
    <reaction evidence="1">
        <text>5-(methylsulfanyl)-D-ribulose 1-phosphate = 5-methylsulfanyl-2,3-dioxopentyl phosphate + H2O</text>
        <dbReference type="Rhea" id="RHEA:15549"/>
        <dbReference type="ChEBI" id="CHEBI:15377"/>
        <dbReference type="ChEBI" id="CHEBI:58548"/>
        <dbReference type="ChEBI" id="CHEBI:58828"/>
        <dbReference type="EC" id="4.2.1.109"/>
    </reaction>
</comment>
<comment type="cofactor">
    <cofactor evidence="1">
        <name>Zn(2+)</name>
        <dbReference type="ChEBI" id="CHEBI:29105"/>
    </cofactor>
    <text evidence="1">Binds 1 zinc ion per subunit.</text>
</comment>
<comment type="pathway">
    <text evidence="1">Amino-acid biosynthesis; L-methionine biosynthesis via salvage pathway; L-methionine from S-methyl-5-thio-alpha-D-ribose 1-phosphate: step 2/6.</text>
</comment>
<comment type="subcellular location">
    <subcellularLocation>
        <location evidence="1">Cytoplasm</location>
    </subcellularLocation>
</comment>
<comment type="similarity">
    <text evidence="1">Belongs to the aldolase class II family. MtnB subfamily.</text>
</comment>
<accession>C1G3Q0</accession>
<reference key="1">
    <citation type="journal article" date="2011" name="PLoS Genet.">
        <title>Comparative genomic analysis of human fungal pathogens causing paracoccidioidomycosis.</title>
        <authorList>
            <person name="Desjardins C.A."/>
            <person name="Champion M.D."/>
            <person name="Holder J.W."/>
            <person name="Muszewska A."/>
            <person name="Goldberg J."/>
            <person name="Bailao A.M."/>
            <person name="Brigido M.M."/>
            <person name="Ferreira M.E."/>
            <person name="Garcia A.M."/>
            <person name="Grynberg M."/>
            <person name="Gujja S."/>
            <person name="Heiman D.I."/>
            <person name="Henn M.R."/>
            <person name="Kodira C.D."/>
            <person name="Leon-Narvaez H."/>
            <person name="Longo L.V.G."/>
            <person name="Ma L.-J."/>
            <person name="Malavazi I."/>
            <person name="Matsuo A.L."/>
            <person name="Morais F.V."/>
            <person name="Pereira M."/>
            <person name="Rodriguez-Brito S."/>
            <person name="Sakthikumar S."/>
            <person name="Salem-Izacc S.M."/>
            <person name="Sykes S.M."/>
            <person name="Teixeira M.M."/>
            <person name="Vallejo M.C."/>
            <person name="Walter M.E."/>
            <person name="Yandava C."/>
            <person name="Young S."/>
            <person name="Zeng Q."/>
            <person name="Zucker J."/>
            <person name="Felipe M.S."/>
            <person name="Goldman G.H."/>
            <person name="Haas B.J."/>
            <person name="McEwen J.G."/>
            <person name="Nino-Vega G."/>
            <person name="Puccia R."/>
            <person name="San-Blas G."/>
            <person name="Soares C.M."/>
            <person name="Birren B.W."/>
            <person name="Cuomo C.A."/>
        </authorList>
    </citation>
    <scope>NUCLEOTIDE SEQUENCE [LARGE SCALE GENOMIC DNA]</scope>
    <source>
        <strain>Pb18</strain>
    </source>
</reference>
<gene>
    <name evidence="1" type="primary">MDE1</name>
    <name type="ORF">PADG_01566</name>
</gene>
<dbReference type="EC" id="4.2.1.109" evidence="1"/>
<dbReference type="EMBL" id="KN275958">
    <property type="protein sequence ID" value="EEH45416.1"/>
    <property type="molecule type" value="Genomic_DNA"/>
</dbReference>
<dbReference type="RefSeq" id="XP_010757502.1">
    <property type="nucleotide sequence ID" value="XM_010759200.1"/>
</dbReference>
<dbReference type="SMR" id="C1G3Q0"/>
<dbReference type="FunCoup" id="C1G3Q0">
    <property type="interactions" value="236"/>
</dbReference>
<dbReference type="STRING" id="502780.C1G3Q0"/>
<dbReference type="GeneID" id="22581208"/>
<dbReference type="KEGG" id="pbn:PADG_01566"/>
<dbReference type="VEuPathDB" id="FungiDB:PADG_01566"/>
<dbReference type="eggNOG" id="KOG2631">
    <property type="taxonomic scope" value="Eukaryota"/>
</dbReference>
<dbReference type="HOGENOM" id="CLU_006033_4_0_1"/>
<dbReference type="InParanoid" id="C1G3Q0"/>
<dbReference type="OMA" id="WFPGTSG"/>
<dbReference type="OrthoDB" id="872at33183"/>
<dbReference type="UniPathway" id="UPA00904">
    <property type="reaction ID" value="UER00875"/>
</dbReference>
<dbReference type="Proteomes" id="UP000001628">
    <property type="component" value="Unassembled WGS sequence"/>
</dbReference>
<dbReference type="GO" id="GO:0005737">
    <property type="term" value="C:cytoplasm"/>
    <property type="evidence" value="ECO:0007669"/>
    <property type="project" value="UniProtKB-SubCell"/>
</dbReference>
<dbReference type="GO" id="GO:0046570">
    <property type="term" value="F:methylthioribulose 1-phosphate dehydratase activity"/>
    <property type="evidence" value="ECO:0007669"/>
    <property type="project" value="UniProtKB-UniRule"/>
</dbReference>
<dbReference type="GO" id="GO:0008270">
    <property type="term" value="F:zinc ion binding"/>
    <property type="evidence" value="ECO:0007669"/>
    <property type="project" value="UniProtKB-UniRule"/>
</dbReference>
<dbReference type="GO" id="GO:0019509">
    <property type="term" value="P:L-methionine salvage from methylthioadenosine"/>
    <property type="evidence" value="ECO:0007669"/>
    <property type="project" value="UniProtKB-UniRule"/>
</dbReference>
<dbReference type="FunFam" id="3.40.225.10:FF:000003">
    <property type="entry name" value="Methylthioribulose-1-phosphate dehydratase"/>
    <property type="match status" value="1"/>
</dbReference>
<dbReference type="Gene3D" id="3.40.225.10">
    <property type="entry name" value="Class II aldolase/adducin N-terminal domain"/>
    <property type="match status" value="1"/>
</dbReference>
<dbReference type="HAMAP" id="MF_03116">
    <property type="entry name" value="Salvage_MtnB_euk"/>
    <property type="match status" value="1"/>
</dbReference>
<dbReference type="InterPro" id="IPR001303">
    <property type="entry name" value="Aldolase_II/adducin_N"/>
</dbReference>
<dbReference type="InterPro" id="IPR036409">
    <property type="entry name" value="Aldolase_II/adducin_N_sf"/>
</dbReference>
<dbReference type="InterPro" id="IPR017714">
    <property type="entry name" value="MethylthioRu-1-P_deHdtase_MtnB"/>
</dbReference>
<dbReference type="InterPro" id="IPR027514">
    <property type="entry name" value="Salvage_MtnB_euk"/>
</dbReference>
<dbReference type="NCBIfam" id="TIGR03328">
    <property type="entry name" value="salvage_mtnB"/>
    <property type="match status" value="1"/>
</dbReference>
<dbReference type="PANTHER" id="PTHR10640">
    <property type="entry name" value="METHYLTHIORIBULOSE-1-PHOSPHATE DEHYDRATASE"/>
    <property type="match status" value="1"/>
</dbReference>
<dbReference type="PANTHER" id="PTHR10640:SF7">
    <property type="entry name" value="METHYLTHIORIBULOSE-1-PHOSPHATE DEHYDRATASE"/>
    <property type="match status" value="1"/>
</dbReference>
<dbReference type="Pfam" id="PF00596">
    <property type="entry name" value="Aldolase_II"/>
    <property type="match status" value="1"/>
</dbReference>
<dbReference type="SMART" id="SM01007">
    <property type="entry name" value="Aldolase_II"/>
    <property type="match status" value="1"/>
</dbReference>
<dbReference type="SUPFAM" id="SSF53639">
    <property type="entry name" value="AraD/HMP-PK domain-like"/>
    <property type="match status" value="1"/>
</dbReference>
<proteinExistence type="inferred from homology"/>
<feature type="chain" id="PRO_0000393836" description="Methylthioribulose-1-phosphate dehydratase">
    <location>
        <begin position="1"/>
        <end position="240"/>
    </location>
</feature>
<feature type="active site" description="Proton donor/acceptor" evidence="1">
    <location>
        <position position="145"/>
    </location>
</feature>
<feature type="binding site" evidence="1">
    <location>
        <position position="99"/>
    </location>
    <ligand>
        <name>substrate</name>
    </ligand>
</feature>
<feature type="binding site" evidence="1">
    <location>
        <position position="116"/>
    </location>
    <ligand>
        <name>Zn(2+)</name>
        <dbReference type="ChEBI" id="CHEBI:29105"/>
    </ligand>
</feature>
<feature type="binding site" evidence="1">
    <location>
        <position position="118"/>
    </location>
    <ligand>
        <name>Zn(2+)</name>
        <dbReference type="ChEBI" id="CHEBI:29105"/>
    </ligand>
</feature>
<feature type="binding site" evidence="1">
    <location>
        <position position="201"/>
    </location>
    <ligand>
        <name>Zn(2+)</name>
        <dbReference type="ChEBI" id="CHEBI:29105"/>
    </ligand>
</feature>
<name>MTNB_PARBD</name>